<protein>
    <recommendedName>
        <fullName evidence="27">Interferon-inducible protein AIM2</fullName>
    </recommendedName>
    <alternativeName>
        <fullName evidence="27">Absent in melanoma 2</fullName>
    </alternativeName>
</protein>
<name>AIM2_HUMAN</name>
<gene>
    <name evidence="27 29" type="primary">AIM2</name>
</gene>
<dbReference type="EMBL" id="AF024714">
    <property type="protein sequence ID" value="AAB81613.1"/>
    <property type="molecule type" value="mRNA"/>
</dbReference>
<dbReference type="EMBL" id="AK292042">
    <property type="protein sequence ID" value="BAF84731.1"/>
    <property type="molecule type" value="mRNA"/>
</dbReference>
<dbReference type="EMBL" id="AL359753">
    <property type="status" value="NOT_ANNOTATED_CDS"/>
    <property type="molecule type" value="Genomic_DNA"/>
</dbReference>
<dbReference type="EMBL" id="BC010940">
    <property type="protein sequence ID" value="AAH10940.1"/>
    <property type="status" value="ALT_FRAME"/>
    <property type="molecule type" value="mRNA"/>
</dbReference>
<dbReference type="CCDS" id="CCDS1181.1"/>
<dbReference type="RefSeq" id="NP_004824.1">
    <property type="nucleotide sequence ID" value="NM_004833.3"/>
</dbReference>
<dbReference type="RefSeq" id="XP_016858337.1">
    <property type="nucleotide sequence ID" value="XM_017002848.1"/>
</dbReference>
<dbReference type="RefSeq" id="XP_047290764.1">
    <property type="nucleotide sequence ID" value="XM_047434808.1"/>
</dbReference>
<dbReference type="RefSeq" id="XP_047290765.1">
    <property type="nucleotide sequence ID" value="XM_047434809.1"/>
</dbReference>
<dbReference type="RefSeq" id="XP_047290767.1">
    <property type="nucleotide sequence ID" value="XM_047434811.1"/>
</dbReference>
<dbReference type="RefSeq" id="XP_054195659.1">
    <property type="nucleotide sequence ID" value="XM_054339684.1"/>
</dbReference>
<dbReference type="RefSeq" id="XP_054195660.1">
    <property type="nucleotide sequence ID" value="XM_054339685.1"/>
</dbReference>
<dbReference type="PDB" id="3RN2">
    <property type="method" value="X-ray"/>
    <property type="resolution" value="2.55 A"/>
    <property type="chains" value="A/B=144-343"/>
</dbReference>
<dbReference type="PDB" id="3RN5">
    <property type="method" value="X-ray"/>
    <property type="resolution" value="2.50 A"/>
    <property type="chains" value="A/B/C/D=144-343"/>
</dbReference>
<dbReference type="PDB" id="3VD8">
    <property type="method" value="X-ray"/>
    <property type="resolution" value="2.07 A"/>
    <property type="chains" value="A=1-107"/>
</dbReference>
<dbReference type="PDB" id="4O7Q">
    <property type="method" value="X-ray"/>
    <property type="resolution" value="1.82 A"/>
    <property type="chains" value="A=1-93"/>
</dbReference>
<dbReference type="PDB" id="6MB2">
    <property type="method" value="EM"/>
    <property type="resolution" value="5.00 A"/>
    <property type="chains" value="A/B/C/D/E/F/G/H/I/J/K/L/M/N/O=1-93"/>
</dbReference>
<dbReference type="PDB" id="7K3R">
    <property type="method" value="EM"/>
    <property type="resolution" value="3.20 A"/>
    <property type="chains" value="A/B/C/D/E/F/G/H/I/J/K/L/M/N/O/P/Q/R/S/T/U=1-117"/>
</dbReference>
<dbReference type="PDBsum" id="3RN2"/>
<dbReference type="PDBsum" id="3RN5"/>
<dbReference type="PDBsum" id="3VD8"/>
<dbReference type="PDBsum" id="4O7Q"/>
<dbReference type="PDBsum" id="6MB2"/>
<dbReference type="PDBsum" id="7K3R"/>
<dbReference type="EMDB" id="EMD-22656"/>
<dbReference type="EMDB" id="EMD-9064"/>
<dbReference type="SMR" id="O14862"/>
<dbReference type="BioGRID" id="114837">
    <property type="interactions" value="113"/>
</dbReference>
<dbReference type="ComplexPortal" id="CPX-4142">
    <property type="entry name" value="AIM2 inflammasome"/>
</dbReference>
<dbReference type="CORUM" id="O14862"/>
<dbReference type="DIP" id="DIP-59741N"/>
<dbReference type="FunCoup" id="O14862">
    <property type="interactions" value="269"/>
</dbReference>
<dbReference type="IntAct" id="O14862">
    <property type="interactions" value="111"/>
</dbReference>
<dbReference type="MINT" id="O14862"/>
<dbReference type="STRING" id="9606.ENSP00000357112"/>
<dbReference type="ChEMBL" id="CHEMBL4630802"/>
<dbReference type="iPTMnet" id="O14862"/>
<dbReference type="PhosphoSitePlus" id="O14862"/>
<dbReference type="BioMuta" id="AIM2"/>
<dbReference type="MassIVE" id="O14862"/>
<dbReference type="PaxDb" id="9606-ENSP00000357112"/>
<dbReference type="PeptideAtlas" id="O14862"/>
<dbReference type="ProteomicsDB" id="48275"/>
<dbReference type="Antibodypedia" id="34257">
    <property type="antibodies" value="623 antibodies from 41 providers"/>
</dbReference>
<dbReference type="DNASU" id="9447"/>
<dbReference type="Ensembl" id="ENST00000368130.9">
    <property type="protein sequence ID" value="ENSP00000357112.4"/>
    <property type="gene ID" value="ENSG00000163568.17"/>
</dbReference>
<dbReference type="Ensembl" id="ENST00000411768.2">
    <property type="protein sequence ID" value="ENSP00000512039.1"/>
    <property type="gene ID" value="ENSG00000163568.17"/>
</dbReference>
<dbReference type="Ensembl" id="ENST00000695580.1">
    <property type="protein sequence ID" value="ENSP00000512040.1"/>
    <property type="gene ID" value="ENSG00000163568.17"/>
</dbReference>
<dbReference type="Ensembl" id="ENST00000850621.1">
    <property type="protein sequence ID" value="ENSP00000520906.1"/>
    <property type="gene ID" value="ENSG00000163568.17"/>
</dbReference>
<dbReference type="GeneID" id="9447"/>
<dbReference type="KEGG" id="hsa:9447"/>
<dbReference type="MANE-Select" id="ENST00000368130.9">
    <property type="protein sequence ID" value="ENSP00000357112.4"/>
    <property type="RefSeq nucleotide sequence ID" value="NM_004833.3"/>
    <property type="RefSeq protein sequence ID" value="NP_004824.1"/>
</dbReference>
<dbReference type="UCSC" id="uc001ftj.2">
    <property type="organism name" value="human"/>
</dbReference>
<dbReference type="AGR" id="HGNC:357"/>
<dbReference type="CTD" id="9447"/>
<dbReference type="DisGeNET" id="9447"/>
<dbReference type="GeneCards" id="AIM2"/>
<dbReference type="HGNC" id="HGNC:357">
    <property type="gene designation" value="AIM2"/>
</dbReference>
<dbReference type="HPA" id="ENSG00000163568">
    <property type="expression patterns" value="Tissue enhanced (intestine, lymphoid tissue)"/>
</dbReference>
<dbReference type="MIM" id="604578">
    <property type="type" value="gene"/>
</dbReference>
<dbReference type="neXtProt" id="NX_O14862"/>
<dbReference type="OpenTargets" id="ENSG00000163568"/>
<dbReference type="PharmGKB" id="PA24651"/>
<dbReference type="VEuPathDB" id="HostDB:ENSG00000163568"/>
<dbReference type="eggNOG" id="ENOG502QTQS">
    <property type="taxonomic scope" value="Eukaryota"/>
</dbReference>
<dbReference type="GeneTree" id="ENSGT00390000013296"/>
<dbReference type="HOGENOM" id="CLU_020123_2_0_1"/>
<dbReference type="InParanoid" id="O14862"/>
<dbReference type="OMA" id="MKCKEGD"/>
<dbReference type="OrthoDB" id="10058437at2759"/>
<dbReference type="PAN-GO" id="O14862">
    <property type="GO annotations" value="4 GO annotations based on evolutionary models"/>
</dbReference>
<dbReference type="PhylomeDB" id="O14862"/>
<dbReference type="TreeFam" id="TF337385"/>
<dbReference type="PathwayCommons" id="O14862"/>
<dbReference type="Reactome" id="R-HSA-1834949">
    <property type="pathway name" value="Cytosolic sensors of pathogen-associated DNA"/>
</dbReference>
<dbReference type="Reactome" id="R-HSA-844615">
    <property type="pathway name" value="The AIM2 inflammasome"/>
</dbReference>
<dbReference type="SignaLink" id="O14862"/>
<dbReference type="SIGNOR" id="O14862"/>
<dbReference type="BioGRID-ORCS" id="9447">
    <property type="hits" value="15 hits in 1154 CRISPR screens"/>
</dbReference>
<dbReference type="ChiTaRS" id="AIM2">
    <property type="organism name" value="human"/>
</dbReference>
<dbReference type="EvolutionaryTrace" id="O14862"/>
<dbReference type="GeneWiki" id="AIM2"/>
<dbReference type="GenomeRNAi" id="9447"/>
<dbReference type="Pharos" id="O14862">
    <property type="development level" value="Tbio"/>
</dbReference>
<dbReference type="PRO" id="PR:O14862"/>
<dbReference type="Proteomes" id="UP000005640">
    <property type="component" value="Chromosome 1"/>
</dbReference>
<dbReference type="RNAct" id="O14862">
    <property type="molecule type" value="protein"/>
</dbReference>
<dbReference type="Bgee" id="ENSG00000163568">
    <property type="expression patterns" value="Expressed in lymph node and 125 other cell types or tissues"/>
</dbReference>
<dbReference type="ExpressionAtlas" id="O14862">
    <property type="expression patterns" value="baseline and differential"/>
</dbReference>
<dbReference type="GO" id="GO:0097169">
    <property type="term" value="C:AIM2 inflammasome complex"/>
    <property type="evidence" value="ECO:0000314"/>
    <property type="project" value="UniProtKB"/>
</dbReference>
<dbReference type="GO" id="GO:0005737">
    <property type="term" value="C:cytoplasm"/>
    <property type="evidence" value="ECO:0000314"/>
    <property type="project" value="UniProtKB"/>
</dbReference>
<dbReference type="GO" id="GO:0005829">
    <property type="term" value="C:cytosol"/>
    <property type="evidence" value="ECO:0000314"/>
    <property type="project" value="HPA"/>
</dbReference>
<dbReference type="GO" id="GO:0005739">
    <property type="term" value="C:mitochondrion"/>
    <property type="evidence" value="ECO:0000314"/>
    <property type="project" value="HPA"/>
</dbReference>
<dbReference type="GO" id="GO:0005654">
    <property type="term" value="C:nucleoplasm"/>
    <property type="evidence" value="ECO:0000314"/>
    <property type="project" value="HPA"/>
</dbReference>
<dbReference type="GO" id="GO:0035861">
    <property type="term" value="C:site of double-strand break"/>
    <property type="evidence" value="ECO:0000250"/>
    <property type="project" value="UniProtKB"/>
</dbReference>
<dbReference type="GO" id="GO:0140608">
    <property type="term" value="F:cysteine-type endopeptidase activator activity"/>
    <property type="evidence" value="ECO:0000314"/>
    <property type="project" value="UniProt"/>
</dbReference>
<dbReference type="GO" id="GO:0003690">
    <property type="term" value="F:double-stranded DNA binding"/>
    <property type="evidence" value="ECO:0000314"/>
    <property type="project" value="UniProtKB"/>
</dbReference>
<dbReference type="GO" id="GO:0042802">
    <property type="term" value="F:identical protein binding"/>
    <property type="evidence" value="ECO:0000353"/>
    <property type="project" value="IntAct"/>
</dbReference>
<dbReference type="GO" id="GO:0038187">
    <property type="term" value="F:pattern recognition receptor activity"/>
    <property type="evidence" value="ECO:0000314"/>
    <property type="project" value="UniProt"/>
</dbReference>
<dbReference type="GO" id="GO:0035591">
    <property type="term" value="F:signaling adaptor activity"/>
    <property type="evidence" value="ECO:0000314"/>
    <property type="project" value="UniProtKB"/>
</dbReference>
<dbReference type="GO" id="GO:0002218">
    <property type="term" value="P:activation of innate immune response"/>
    <property type="evidence" value="ECO:0000314"/>
    <property type="project" value="UniProtKB"/>
</dbReference>
<dbReference type="GO" id="GO:0140970">
    <property type="term" value="P:AIM2 inflammasome complex assembly"/>
    <property type="evidence" value="ECO:0000314"/>
    <property type="project" value="UniProtKB"/>
</dbReference>
<dbReference type="GO" id="GO:0007420">
    <property type="term" value="P:brain development"/>
    <property type="evidence" value="ECO:0000250"/>
    <property type="project" value="UniProtKB"/>
</dbReference>
<dbReference type="GO" id="GO:0035458">
    <property type="term" value="P:cellular response to interferon-beta"/>
    <property type="evidence" value="ECO:0000318"/>
    <property type="project" value="GO_Central"/>
</dbReference>
<dbReference type="GO" id="GO:0071466">
    <property type="term" value="P:cellular response to xenobiotic stimulus"/>
    <property type="evidence" value="ECO:0000314"/>
    <property type="project" value="MGI"/>
</dbReference>
<dbReference type="GO" id="GO:0051607">
    <property type="term" value="P:defense response to virus"/>
    <property type="evidence" value="ECO:0000303"/>
    <property type="project" value="ComplexPortal"/>
</dbReference>
<dbReference type="GO" id="GO:0006974">
    <property type="term" value="P:DNA damage response"/>
    <property type="evidence" value="ECO:0000250"/>
    <property type="project" value="UniProtKB"/>
</dbReference>
<dbReference type="GO" id="GO:0006955">
    <property type="term" value="P:immune response"/>
    <property type="evidence" value="ECO:0000304"/>
    <property type="project" value="ProtInc"/>
</dbReference>
<dbReference type="GO" id="GO:0045087">
    <property type="term" value="P:innate immune response"/>
    <property type="evidence" value="ECO:0007669"/>
    <property type="project" value="UniProtKB-KW"/>
</dbReference>
<dbReference type="GO" id="GO:0032088">
    <property type="term" value="P:negative regulation of NF-kappaB transcription factor activity"/>
    <property type="evidence" value="ECO:0000314"/>
    <property type="project" value="UniProtKB"/>
</dbReference>
<dbReference type="GO" id="GO:0051898">
    <property type="term" value="P:negative regulation of phosphatidylinositol 3-kinase/protein kinase B signal transduction"/>
    <property type="evidence" value="ECO:0000250"/>
    <property type="project" value="UniProtKB"/>
</dbReference>
<dbReference type="GO" id="GO:0070050">
    <property type="term" value="P:neuron cellular homeostasis"/>
    <property type="evidence" value="ECO:0000250"/>
    <property type="project" value="UniProtKB"/>
</dbReference>
<dbReference type="GO" id="GO:0002221">
    <property type="term" value="P:pattern recognition receptor signaling pathway"/>
    <property type="evidence" value="ECO:0000303"/>
    <property type="project" value="ComplexPortal"/>
</dbReference>
<dbReference type="GO" id="GO:0002230">
    <property type="term" value="P:positive regulation of defense response to virus by host"/>
    <property type="evidence" value="ECO:0000250"/>
    <property type="project" value="UniProtKB"/>
</dbReference>
<dbReference type="GO" id="GO:0050729">
    <property type="term" value="P:positive regulation of inflammatory response"/>
    <property type="evidence" value="ECO:0000303"/>
    <property type="project" value="ComplexPortal"/>
</dbReference>
<dbReference type="GO" id="GO:0032731">
    <property type="term" value="P:positive regulation of interleukin-1 beta production"/>
    <property type="evidence" value="ECO:0000314"/>
    <property type="project" value="UniProtKB"/>
</dbReference>
<dbReference type="GO" id="GO:0051092">
    <property type="term" value="P:positive regulation of NF-kappaB transcription factor activity"/>
    <property type="evidence" value="ECO:0000314"/>
    <property type="project" value="UniProtKB"/>
</dbReference>
<dbReference type="GO" id="GO:1904270">
    <property type="term" value="P:pyroptosome complex assembly"/>
    <property type="evidence" value="ECO:0000314"/>
    <property type="project" value="GO_Central"/>
</dbReference>
<dbReference type="GO" id="GO:0070269">
    <property type="term" value="P:pyroptotic inflammatory response"/>
    <property type="evidence" value="ECO:0000314"/>
    <property type="project" value="UniProtKB"/>
</dbReference>
<dbReference type="GO" id="GO:0050795">
    <property type="term" value="P:regulation of behavior"/>
    <property type="evidence" value="ECO:0000250"/>
    <property type="project" value="UniProtKB"/>
</dbReference>
<dbReference type="GO" id="GO:0043029">
    <property type="term" value="P:T cell homeostasis"/>
    <property type="evidence" value="ECO:0000250"/>
    <property type="project" value="UniProtKB"/>
</dbReference>
<dbReference type="GO" id="GO:0033209">
    <property type="term" value="P:tumor necrosis factor-mediated signaling pathway"/>
    <property type="evidence" value="ECO:0000314"/>
    <property type="project" value="UniProtKB"/>
</dbReference>
<dbReference type="CDD" id="cd08305">
    <property type="entry name" value="Pyrin"/>
    <property type="match status" value="1"/>
</dbReference>
<dbReference type="FunFam" id="1.10.533.10:FF:000076">
    <property type="entry name" value="Interferon-inducible protein AIM2"/>
    <property type="match status" value="1"/>
</dbReference>
<dbReference type="FunFam" id="2.40.50.140:FF:000101">
    <property type="entry name" value="Myeloid cell nuclear differentiation antigen"/>
    <property type="match status" value="1"/>
</dbReference>
<dbReference type="FunFam" id="2.40.50.140:FF:000105">
    <property type="entry name" value="Myeloid cell nuclear differentiation antigen"/>
    <property type="match status" value="1"/>
</dbReference>
<dbReference type="Gene3D" id="1.10.533.10">
    <property type="entry name" value="Death Domain, Fas"/>
    <property type="match status" value="1"/>
</dbReference>
<dbReference type="Gene3D" id="2.40.50.140">
    <property type="entry name" value="Nucleic acid-binding proteins"/>
    <property type="match status" value="2"/>
</dbReference>
<dbReference type="InterPro" id="IPR004020">
    <property type="entry name" value="DAPIN"/>
</dbReference>
<dbReference type="InterPro" id="IPR011029">
    <property type="entry name" value="DEATH-like_dom_sf"/>
</dbReference>
<dbReference type="InterPro" id="IPR040205">
    <property type="entry name" value="HIN-200"/>
</dbReference>
<dbReference type="InterPro" id="IPR004021">
    <property type="entry name" value="HIN200/IF120x"/>
</dbReference>
<dbReference type="InterPro" id="IPR012340">
    <property type="entry name" value="NA-bd_OB-fold"/>
</dbReference>
<dbReference type="PANTHER" id="PTHR12200:SF17">
    <property type="entry name" value="INTERFERON-INDUCIBLE PROTEIN AIM2"/>
    <property type="match status" value="1"/>
</dbReference>
<dbReference type="PANTHER" id="PTHR12200">
    <property type="entry name" value="INTERFERON-INDUCIBLE PROTEIN AIM2 FAMILY MEMBER"/>
    <property type="match status" value="1"/>
</dbReference>
<dbReference type="Pfam" id="PF02760">
    <property type="entry name" value="HIN"/>
    <property type="match status" value="1"/>
</dbReference>
<dbReference type="Pfam" id="PF02758">
    <property type="entry name" value="PYRIN"/>
    <property type="match status" value="1"/>
</dbReference>
<dbReference type="SMART" id="SM01289">
    <property type="entry name" value="PYRIN"/>
    <property type="match status" value="1"/>
</dbReference>
<dbReference type="SUPFAM" id="SSF47986">
    <property type="entry name" value="DEATH domain"/>
    <property type="match status" value="1"/>
</dbReference>
<dbReference type="SUPFAM" id="SSF159141">
    <property type="entry name" value="HIN-2000 domain-like"/>
    <property type="match status" value="2"/>
</dbReference>
<dbReference type="PROSITE" id="PS50824">
    <property type="entry name" value="DAPIN"/>
    <property type="match status" value="1"/>
</dbReference>
<dbReference type="PROSITE" id="PS50834">
    <property type="entry name" value="HIN_200"/>
    <property type="match status" value="1"/>
</dbReference>
<keyword id="KW-0002">3D-structure</keyword>
<keyword id="KW-0963">Cytoplasm</keyword>
<keyword id="KW-0227">DNA damage</keyword>
<keyword id="KW-0238">DNA-binding</keyword>
<keyword id="KW-0391">Immunity</keyword>
<keyword id="KW-1271">Inflammasome</keyword>
<keyword id="KW-0395">Inflammatory response</keyword>
<keyword id="KW-0399">Innate immunity</keyword>
<keyword id="KW-0539">Nucleus</keyword>
<keyword id="KW-1267">Proteomics identification</keyword>
<keyword id="KW-1185">Reference proteome</keyword>
<keyword id="KW-0043">Tumor suppressor</keyword>
<evidence type="ECO:0000250" key="1">
    <source>
        <dbReference type="UniProtKB" id="Q91VJ1"/>
    </source>
</evidence>
<evidence type="ECO:0000255" key="2">
    <source>
        <dbReference type="PROSITE-ProRule" id="PRU00061"/>
    </source>
</evidence>
<evidence type="ECO:0000255" key="3">
    <source>
        <dbReference type="PROSITE-ProRule" id="PRU00106"/>
    </source>
</evidence>
<evidence type="ECO:0000269" key="4">
    <source>
    </source>
</evidence>
<evidence type="ECO:0000269" key="5">
    <source>
    </source>
</evidence>
<evidence type="ECO:0000269" key="6">
    <source>
    </source>
</evidence>
<evidence type="ECO:0000269" key="7">
    <source>
    </source>
</evidence>
<evidence type="ECO:0000269" key="8">
    <source>
    </source>
</evidence>
<evidence type="ECO:0000269" key="9">
    <source>
    </source>
</evidence>
<evidence type="ECO:0000269" key="10">
    <source>
    </source>
</evidence>
<evidence type="ECO:0000269" key="11">
    <source>
    </source>
</evidence>
<evidence type="ECO:0000269" key="12">
    <source>
    </source>
</evidence>
<evidence type="ECO:0000269" key="13">
    <source>
    </source>
</evidence>
<evidence type="ECO:0000269" key="14">
    <source>
    </source>
</evidence>
<evidence type="ECO:0000269" key="15">
    <source>
    </source>
</evidence>
<evidence type="ECO:0000269" key="16">
    <source>
    </source>
</evidence>
<evidence type="ECO:0000269" key="17">
    <source>
    </source>
</evidence>
<evidence type="ECO:0000269" key="18">
    <source>
    </source>
</evidence>
<evidence type="ECO:0000269" key="19">
    <source>
    </source>
</evidence>
<evidence type="ECO:0000269" key="20">
    <source>
    </source>
</evidence>
<evidence type="ECO:0000269" key="21">
    <source>
    </source>
</evidence>
<evidence type="ECO:0000269" key="22">
    <source>
    </source>
</evidence>
<evidence type="ECO:0000269" key="23">
    <source>
    </source>
</evidence>
<evidence type="ECO:0000269" key="24">
    <source>
    </source>
</evidence>
<evidence type="ECO:0000269" key="25">
    <source>
    </source>
</evidence>
<evidence type="ECO:0000269" key="26">
    <source>
    </source>
</evidence>
<evidence type="ECO:0000303" key="27">
    <source>
    </source>
</evidence>
<evidence type="ECO:0000305" key="28"/>
<evidence type="ECO:0000312" key="29">
    <source>
        <dbReference type="HGNC" id="HGNC:357"/>
    </source>
</evidence>
<evidence type="ECO:0007744" key="30">
    <source>
        <dbReference type="PDB" id="3VD8"/>
    </source>
</evidence>
<evidence type="ECO:0007744" key="31">
    <source>
        <dbReference type="PDB" id="4O7Q"/>
    </source>
</evidence>
<evidence type="ECO:0007744" key="32">
    <source>
        <dbReference type="PDB" id="6MB2"/>
    </source>
</evidence>
<evidence type="ECO:0007744" key="33">
    <source>
        <dbReference type="PDB" id="7K3R"/>
    </source>
</evidence>
<evidence type="ECO:0007829" key="34">
    <source>
        <dbReference type="PDB" id="3RN2"/>
    </source>
</evidence>
<evidence type="ECO:0007829" key="35">
    <source>
        <dbReference type="PDB" id="3RN5"/>
    </source>
</evidence>
<evidence type="ECO:0007829" key="36">
    <source>
        <dbReference type="PDB" id="4O7Q"/>
    </source>
</evidence>
<comment type="function">
    <text evidence="1 6 7 8 9 10 15 18 19 21 23 24">Sensor component of the AIM2 inflammasome, which mediates inflammasome activation in response to the presence of double-stranded DNA (dsDNA) in the cytosol, leading to subsequent pyroptosis (PubMed:17726700, PubMed:19158675, PubMed:19158676, PubMed:19158679, PubMed:20566831, PubMed:23530044, PubMed:26197926, PubMed:26583071, PubMed:29440442, PubMed:33980849, PubMed:37364111). Inflammasomes are supramolecular complexes that assemble in the cytosol in response to pathogens and other damage-associated signals and play critical roles in innate immunity and inflammation (PubMed:17726700, PubMed:19158675, PubMed:19158676, PubMed:19158679, PubMed:20566831, PubMed:26197926, PubMed:29440442, PubMed:33980849). Acts as a recognition receptor (PRR): specifically recognizes and binds dsDNA in the cytosol, and mediates the formation of the inflammasome polymeric complex composed of AIM2, CASP1 and PYCARD/ASC (PubMed:17726700, PubMed:19158675, PubMed:19158676, PubMed:19158679, PubMed:20566831, PubMed:26197926, PubMed:29440442, PubMed:33980849). Recruitment of pro-caspase-1 (proCASP1) to the AIM2 inflammasome promotes caspase-1 (CASP1) activation, which subsequently cleaves and activates inflammatory cytokines IL1B and IL18 and gasdermin-D (GSDMD), promoting cytokine secretion (PubMed:17726700, PubMed:19158675, PubMed:19158676, PubMed:19158679, PubMed:20566831). In some cells, CASP1 activation mediates cleavage and activation of GSDMD, triggering pyroptosis without promoting cytokine secretion (PubMed:19158675, PubMed:19158676). Detects cytosolic dsDNA of viral and bacterial origin in a non-sequence-specific manner (PubMed:17726700, PubMed:19158675, PubMed:19158676, PubMed:19158679, PubMed:20566831, PubMed:26197926, PubMed:26583071, PubMed:29440442, PubMed:33980849). Involved in the DNA damage response caused by acute ionizing radiation by mediating pyroptosis of intestinal epithelial cells and bone marrow cells in response to double-strand DNA breaks (By similarity). Mechanistically, AIM2 senses DNA damage in the nucleus to mediate inflammasome assembly and inflammatory cell death (By similarity). Also acts as a regulator of neurodevelopment via its role in the DNA damage response: acts by promoting neural cell death in response to DNA damage in the developing brain, thereby purging genetically compromised cells of the central nervous system (By similarity). Pyroptosis mediated by the AIM2 inflammasome in response to DNA damage is dependent on GSDMD without involving IL1B and IL18 cytokine secretion (By similarity). Also acts as a mediator of pyroptosis, necroptosis and apoptosis (PANoptosis), an integral part of host defense against pathogens, in response to bacterial infection (By similarity). Can also trigger PYCARD/ASC-dependent, caspase-1-independent cell death that involves caspase-8 (CASP8) (By similarity).</text>
</comment>
<comment type="function">
    <text evidence="1 5">Also acts as a tumor suppressor independently of its role in inflammatory response (PubMed:16432157). Able to suppress overt cell proliferation in enterocytes: restricts stem cell proliferation in the intestinal mucosa in an inflammasome-independent manner, contributing to a decrease in the likelihood of colorectal cancer development (By similarity). AIM2 suppresses cell proliferation by inhibiting phosphorylation of AKT1 at 'Ser-473', preventing AKT1 activation and AKT-mTOR signaling pathway (By similarity). Inhibits AKT1 phosphorylation both by inhibiting the activity of PRKDC/DNA-PK kinase and promoting dephosphorylation by PP2A phosphatase (By similarity). Also acts as a key regulator of regulatory T-cells (Treg) homeostasis by promoting their stability: acts by preventing AKT1 activation (By similarity). Its role in Treg homeostasis is important to restain autoimmune diseases (By similarity).</text>
</comment>
<comment type="activity regulation">
    <text evidence="1 5 7 8 12 18 20 21 22 23">Inactive in absence of double-stranded DNA (dsDNA) (PubMed:22483801, PubMed:26197926). Homooligomerizes upon binding to dsDNA, dsDNA serving as an oligomerization platform (PubMed:26197926, PubMed:33980849). AIM2 requires large dsDNA to generate a structural template that couples dsDNA ligand-binding and homooligomerization (PubMed:26197926). Homooligomerization is followed by recruitment of PYCARD/ASC to initiate speck formation (nucleation) (PubMed:22483801, PubMed:26197926, PubMed:29440442, PubMed:33980849). AIM2 and PYCARD/ASC homooligomer filaments assemble bidirectionally and the recognition between AIM2 and PYCARD/ASC oligomers occurs in a head-to-tail manner (PubMed:33980849). Clustered PYCARD/ASC nucleates the formation of CASP1 filaments through the interaction of their respective CARD domains, acting as a platform for CASP1 polymerization and activation (PubMed:19158675, PubMed:19158676). Active CASP1 then specifically processes protein precursors, such as gasdermin-D (GSDMD), IL1B and IL18, leading to the release of mature cytokines in the extracellular milieu or pyroptosis, depending on cell type (PubMed:16432157, PubMed:19158675, PubMed:19158676). AIM2 can be activated in response to events that cause genomic DNA (HIV protease inhibitor nelfinavir) or mitochondrial DNA release in the cytoplasm (such as Perfluoroalkyl substance pollutants or cholesterol overload) (By similarity). Activation of the AIM2 inflammasome is inhibited by isoform IFI16-beta of IFI16, which prevents the interaction between AIM2 and PYCARD/ASC (PubMed:30104205). Activation of the AIM2 inflammasome is inhibited by TRIM11, which promotes autophagy-dependent degradation of AIM2 (PubMed:27498865).</text>
</comment>
<comment type="subunit">
    <text evidence="1 4 7 8 9 11 12 13 14 15 16 17 18 19 20 21 22 23">Self-associates; forms homooligomers in response to cytosolic double-stranded DNA (dsDNA) and the dsDNA seems to serve as oligomerization platform (PubMed:15582594, PubMed:19158676, PubMed:24406744, PubMed:26197926, PubMed:26583071, PubMed:29440442, PubMed:33980849). Component of AIM2 inflammasome, which consists of a signal sensor component (AIM2), an adapter (PYCARD/ASC), which recruits an effector pro-inflammatory caspase (CASP1) (PubMed:22483801, PubMed:22869553, PubMed:33980849). Interacts (via pyrin domain) with PYCARD/ASC (via pyrin domain); interaction is direct (PubMed:19158675, PubMed:19158679, PubMed:23530044, PubMed:29440442, PubMed:33980849). Component of the AIM2 PANoptosome complex, a multiprotein complex that drives inflammatory cell death (PANoptosis) (By similarity). Interacts with PYDC5; disrupts assembly of the AIM2 inflammasome complex (PubMed:24531343). Interacts with EIF2AK2/PKR (PubMed:22801494). Interacts with MAPRE1 (PubMed:22869553). Interacts with IFI16 (PubMed:22046441). Interacts with isoform IFI16-beta of IFI16; preventing the interaction between AIM2 and PYCARD/ASC (PubMed:30104205). Interacts with RACK1; promoting association with PP2A phosphatase and dephosphorylation of AKT1 (By similarity). Interacts with TRIM11; promoting AIM2 recruitment to autophagosomes and autophagy-dependent degradation (PubMed:27498865).</text>
</comment>
<comment type="subunit">
    <text evidence="24">(Microbial infection) Interacts with human herpesvirus 8 protein SOX/ORF37; this interaction inhibits AIM2 polymerization and subsequent inflammasome activation.</text>
</comment>
<comment type="interaction">
    <interactant intactId="EBI-6253193">
        <id>O14862</id>
    </interactant>
    <interactant intactId="EBI-6253193">
        <id>O14862</id>
        <label>AIM2</label>
    </interactant>
    <organismsDiffer>false</organismsDiffer>
    <experiments>3</experiments>
</comment>
<comment type="interaction">
    <interactant intactId="EBI-6253193">
        <id>O14862</id>
    </interactant>
    <interactant intactId="EBI-751215">
        <id>Q9ULZ3</id>
        <label>PYCARD</label>
    </interactant>
    <organismsDiffer>false</organismsDiffer>
    <experiments>13</experiments>
</comment>
<comment type="subcellular location">
    <subcellularLocation>
        <location evidence="7 8 9 17 25">Cytoplasm</location>
    </subcellularLocation>
    <subcellularLocation>
        <location evidence="8 9">Inflammasome</location>
    </subcellularLocation>
    <subcellularLocation>
        <location evidence="4">Nucleus</location>
    </subcellularLocation>
    <text evidence="1 7 8 9">Activated inflammasomes can aggregate in the cytosol as speck-like particles (PubMed:19158675, PubMed:19158676, PubMed:19158679). Activated inflammasomes can also aggregate in the nucleus in response to DNA damage: AIM2 is recruited to double-strand DNA breaks and mediates activation of the AIM2 inflammasome (By similarity).</text>
</comment>
<comment type="tissue specificity">
    <text evidence="26">Expressed in spleen, small intestine, peripheral blood leukocytes, and testis.</text>
</comment>
<comment type="induction">
    <text evidence="4 9 26">By IFNG/IFN-gamma and IFNB1/IFN-beta.</text>
</comment>
<comment type="domain">
    <text evidence="7 8">The pyrin domain mediates homotypic interaction with PYCARD/ASC (PubMed:19158675, PubMed:19158676).</text>
</comment>
<comment type="domain">
    <text evidence="12">The HIN-200 domain mediates dsDNA binding via electrostatic interactions.</text>
</comment>
<comment type="PTM">
    <text evidence="20">Degraded via selective autophagy following interaction with TRIM11.</text>
</comment>
<comment type="miscellaneous">
    <text evidence="6">Defects in AIM2 may be a cause of microsatellite unstable colon cancers.</text>
</comment>
<comment type="similarity">
    <text evidence="28">Belongs to the HIN-200 family.</text>
</comment>
<comment type="caution">
    <text evidence="12 18">According to a report, AIM2 is autoinhibited in absence of double-stranded DNA (dsDNA) due to an interaction between the pyrin and HIN-200 domains that induce a closed conformation (PubMed:22483801). However, it was later shown that AIM2 is not autoinhibited and that dsDNA acts as a molecular ruler to promote its homooligomerization (PubMed:26197926).</text>
</comment>
<comment type="sequence caution" evidence="28">
    <conflict type="frameshift">
        <sequence resource="EMBL-CDS" id="AAH10940"/>
    </conflict>
</comment>
<sequence length="343" mass="38954">MESKYKEILLLTGLDNITDEELDRFKFFLSDEFNIATGKLHTANRIQVATLMIQNAGAVSAVMKTIRIFQKLNYMLLAKRLQEEKEKVDKQYKSVTKPKPLSQAEMSPAASAAIRNDVAKQRAAPKVSPHVKPEQKQMVAQQESIREGFQKRCLPVMVLKAKKPFTFETQEGKQEMFHATVATEKEFFFVKVFNTLLKDKFIPKRIIIIARYYRHSGFLEVNSASRVLDAESDQKVNVPLNIIRKAGETPKINTLQTQPLGTIVNGLFVVQKVTEKKKNILFDLSDNTGKMEVLGVRNEDTMKCKEGDKVRLTFFTLSKNGEKLQLTSGVHSTIKVIKAKKKT</sequence>
<reference key="1">
    <citation type="journal article" date="1997" name="Oncogene">
        <title>Cloning a novel member of the human interferon-inducible gene family associated with control of tumorigenicity in a model of human melanoma.</title>
        <authorList>
            <person name="DeYoung K.L."/>
            <person name="Ray M.E."/>
            <person name="Su Y.A."/>
            <person name="Anzick S.L."/>
            <person name="Johnstone R.W."/>
            <person name="Trapani J.A."/>
            <person name="Meltzer P.S."/>
            <person name="Trent J.M."/>
        </authorList>
    </citation>
    <scope>NUCLEOTIDE SEQUENCE [MRNA]</scope>
    <scope>TISSUE SPECIFICITY</scope>
    <scope>INDUCTION BY IFNG</scope>
</reference>
<reference key="2">
    <citation type="journal article" date="2004" name="Nat. Genet.">
        <title>Complete sequencing and characterization of 21,243 full-length human cDNAs.</title>
        <authorList>
            <person name="Ota T."/>
            <person name="Suzuki Y."/>
            <person name="Nishikawa T."/>
            <person name="Otsuki T."/>
            <person name="Sugiyama T."/>
            <person name="Irie R."/>
            <person name="Wakamatsu A."/>
            <person name="Hayashi K."/>
            <person name="Sato H."/>
            <person name="Nagai K."/>
            <person name="Kimura K."/>
            <person name="Makita H."/>
            <person name="Sekine M."/>
            <person name="Obayashi M."/>
            <person name="Nishi T."/>
            <person name="Shibahara T."/>
            <person name="Tanaka T."/>
            <person name="Ishii S."/>
            <person name="Yamamoto J."/>
            <person name="Saito K."/>
            <person name="Kawai Y."/>
            <person name="Isono Y."/>
            <person name="Nakamura Y."/>
            <person name="Nagahari K."/>
            <person name="Murakami K."/>
            <person name="Yasuda T."/>
            <person name="Iwayanagi T."/>
            <person name="Wagatsuma M."/>
            <person name="Shiratori A."/>
            <person name="Sudo H."/>
            <person name="Hosoiri T."/>
            <person name="Kaku Y."/>
            <person name="Kodaira H."/>
            <person name="Kondo H."/>
            <person name="Sugawara M."/>
            <person name="Takahashi M."/>
            <person name="Kanda K."/>
            <person name="Yokoi T."/>
            <person name="Furuya T."/>
            <person name="Kikkawa E."/>
            <person name="Omura Y."/>
            <person name="Abe K."/>
            <person name="Kamihara K."/>
            <person name="Katsuta N."/>
            <person name="Sato K."/>
            <person name="Tanikawa M."/>
            <person name="Yamazaki M."/>
            <person name="Ninomiya K."/>
            <person name="Ishibashi T."/>
            <person name="Yamashita H."/>
            <person name="Murakawa K."/>
            <person name="Fujimori K."/>
            <person name="Tanai H."/>
            <person name="Kimata M."/>
            <person name="Watanabe M."/>
            <person name="Hiraoka S."/>
            <person name="Chiba Y."/>
            <person name="Ishida S."/>
            <person name="Ono Y."/>
            <person name="Takiguchi S."/>
            <person name="Watanabe S."/>
            <person name="Yosida M."/>
            <person name="Hotuta T."/>
            <person name="Kusano J."/>
            <person name="Kanehori K."/>
            <person name="Takahashi-Fujii A."/>
            <person name="Hara H."/>
            <person name="Tanase T.-O."/>
            <person name="Nomura Y."/>
            <person name="Togiya S."/>
            <person name="Komai F."/>
            <person name="Hara R."/>
            <person name="Takeuchi K."/>
            <person name="Arita M."/>
            <person name="Imose N."/>
            <person name="Musashino K."/>
            <person name="Yuuki H."/>
            <person name="Oshima A."/>
            <person name="Sasaki N."/>
            <person name="Aotsuka S."/>
            <person name="Yoshikawa Y."/>
            <person name="Matsunawa H."/>
            <person name="Ichihara T."/>
            <person name="Shiohata N."/>
            <person name="Sano S."/>
            <person name="Moriya S."/>
            <person name="Momiyama H."/>
            <person name="Satoh N."/>
            <person name="Takami S."/>
            <person name="Terashima Y."/>
            <person name="Suzuki O."/>
            <person name="Nakagawa S."/>
            <person name="Senoh A."/>
            <person name="Mizoguchi H."/>
            <person name="Goto Y."/>
            <person name="Shimizu F."/>
            <person name="Wakebe H."/>
            <person name="Hishigaki H."/>
            <person name="Watanabe T."/>
            <person name="Sugiyama A."/>
            <person name="Takemoto M."/>
            <person name="Kawakami B."/>
            <person name="Yamazaki M."/>
            <person name="Watanabe K."/>
            <person name="Kumagai A."/>
            <person name="Itakura S."/>
            <person name="Fukuzumi Y."/>
            <person name="Fujimori Y."/>
            <person name="Komiyama M."/>
            <person name="Tashiro H."/>
            <person name="Tanigami A."/>
            <person name="Fujiwara T."/>
            <person name="Ono T."/>
            <person name="Yamada K."/>
            <person name="Fujii Y."/>
            <person name="Ozaki K."/>
            <person name="Hirao M."/>
            <person name="Ohmori Y."/>
            <person name="Kawabata A."/>
            <person name="Hikiji T."/>
            <person name="Kobatake N."/>
            <person name="Inagaki H."/>
            <person name="Ikema Y."/>
            <person name="Okamoto S."/>
            <person name="Okitani R."/>
            <person name="Kawakami T."/>
            <person name="Noguchi S."/>
            <person name="Itoh T."/>
            <person name="Shigeta K."/>
            <person name="Senba T."/>
            <person name="Matsumura K."/>
            <person name="Nakajima Y."/>
            <person name="Mizuno T."/>
            <person name="Morinaga M."/>
            <person name="Sasaki M."/>
            <person name="Togashi T."/>
            <person name="Oyama M."/>
            <person name="Hata H."/>
            <person name="Watanabe M."/>
            <person name="Komatsu T."/>
            <person name="Mizushima-Sugano J."/>
            <person name="Satoh T."/>
            <person name="Shirai Y."/>
            <person name="Takahashi Y."/>
            <person name="Nakagawa K."/>
            <person name="Okumura K."/>
            <person name="Nagase T."/>
            <person name="Nomura N."/>
            <person name="Kikuchi H."/>
            <person name="Masuho Y."/>
            <person name="Yamashita R."/>
            <person name="Nakai K."/>
            <person name="Yada T."/>
            <person name="Nakamura Y."/>
            <person name="Ohara O."/>
            <person name="Isogai T."/>
            <person name="Sugano S."/>
        </authorList>
    </citation>
    <scope>NUCLEOTIDE SEQUENCE [LARGE SCALE MRNA]</scope>
    <source>
        <tissue>Spleen</tissue>
    </source>
</reference>
<reference key="3">
    <citation type="journal article" date="2006" name="Nature">
        <title>The DNA sequence and biological annotation of human chromosome 1.</title>
        <authorList>
            <person name="Gregory S.G."/>
            <person name="Barlow K.F."/>
            <person name="McLay K.E."/>
            <person name="Kaul R."/>
            <person name="Swarbreck D."/>
            <person name="Dunham A."/>
            <person name="Scott C.E."/>
            <person name="Howe K.L."/>
            <person name="Woodfine K."/>
            <person name="Spencer C.C.A."/>
            <person name="Jones M.C."/>
            <person name="Gillson C."/>
            <person name="Searle S."/>
            <person name="Zhou Y."/>
            <person name="Kokocinski F."/>
            <person name="McDonald L."/>
            <person name="Evans R."/>
            <person name="Phillips K."/>
            <person name="Atkinson A."/>
            <person name="Cooper R."/>
            <person name="Jones C."/>
            <person name="Hall R.E."/>
            <person name="Andrews T.D."/>
            <person name="Lloyd C."/>
            <person name="Ainscough R."/>
            <person name="Almeida J.P."/>
            <person name="Ambrose K.D."/>
            <person name="Anderson F."/>
            <person name="Andrew R.W."/>
            <person name="Ashwell R.I.S."/>
            <person name="Aubin K."/>
            <person name="Babbage A.K."/>
            <person name="Bagguley C.L."/>
            <person name="Bailey J."/>
            <person name="Beasley H."/>
            <person name="Bethel G."/>
            <person name="Bird C.P."/>
            <person name="Bray-Allen S."/>
            <person name="Brown J.Y."/>
            <person name="Brown A.J."/>
            <person name="Buckley D."/>
            <person name="Burton J."/>
            <person name="Bye J."/>
            <person name="Carder C."/>
            <person name="Chapman J.C."/>
            <person name="Clark S.Y."/>
            <person name="Clarke G."/>
            <person name="Clee C."/>
            <person name="Cobley V."/>
            <person name="Collier R.E."/>
            <person name="Corby N."/>
            <person name="Coville G.J."/>
            <person name="Davies J."/>
            <person name="Deadman R."/>
            <person name="Dunn M."/>
            <person name="Earthrowl M."/>
            <person name="Ellington A.G."/>
            <person name="Errington H."/>
            <person name="Frankish A."/>
            <person name="Frankland J."/>
            <person name="French L."/>
            <person name="Garner P."/>
            <person name="Garnett J."/>
            <person name="Gay L."/>
            <person name="Ghori M.R.J."/>
            <person name="Gibson R."/>
            <person name="Gilby L.M."/>
            <person name="Gillett W."/>
            <person name="Glithero R.J."/>
            <person name="Grafham D.V."/>
            <person name="Griffiths C."/>
            <person name="Griffiths-Jones S."/>
            <person name="Grocock R."/>
            <person name="Hammond S."/>
            <person name="Harrison E.S.I."/>
            <person name="Hart E."/>
            <person name="Haugen E."/>
            <person name="Heath P.D."/>
            <person name="Holmes S."/>
            <person name="Holt K."/>
            <person name="Howden P.J."/>
            <person name="Hunt A.R."/>
            <person name="Hunt S.E."/>
            <person name="Hunter G."/>
            <person name="Isherwood J."/>
            <person name="James R."/>
            <person name="Johnson C."/>
            <person name="Johnson D."/>
            <person name="Joy A."/>
            <person name="Kay M."/>
            <person name="Kershaw J.K."/>
            <person name="Kibukawa M."/>
            <person name="Kimberley A.M."/>
            <person name="King A."/>
            <person name="Knights A.J."/>
            <person name="Lad H."/>
            <person name="Laird G."/>
            <person name="Lawlor S."/>
            <person name="Leongamornlert D.A."/>
            <person name="Lloyd D.M."/>
            <person name="Loveland J."/>
            <person name="Lovell J."/>
            <person name="Lush M.J."/>
            <person name="Lyne R."/>
            <person name="Martin S."/>
            <person name="Mashreghi-Mohammadi M."/>
            <person name="Matthews L."/>
            <person name="Matthews N.S.W."/>
            <person name="McLaren S."/>
            <person name="Milne S."/>
            <person name="Mistry S."/>
            <person name="Moore M.J.F."/>
            <person name="Nickerson T."/>
            <person name="O'Dell C.N."/>
            <person name="Oliver K."/>
            <person name="Palmeiri A."/>
            <person name="Palmer S.A."/>
            <person name="Parker A."/>
            <person name="Patel D."/>
            <person name="Pearce A.V."/>
            <person name="Peck A.I."/>
            <person name="Pelan S."/>
            <person name="Phelps K."/>
            <person name="Phillimore B.J."/>
            <person name="Plumb R."/>
            <person name="Rajan J."/>
            <person name="Raymond C."/>
            <person name="Rouse G."/>
            <person name="Saenphimmachak C."/>
            <person name="Sehra H.K."/>
            <person name="Sheridan E."/>
            <person name="Shownkeen R."/>
            <person name="Sims S."/>
            <person name="Skuce C.D."/>
            <person name="Smith M."/>
            <person name="Steward C."/>
            <person name="Subramanian S."/>
            <person name="Sycamore N."/>
            <person name="Tracey A."/>
            <person name="Tromans A."/>
            <person name="Van Helmond Z."/>
            <person name="Wall M."/>
            <person name="Wallis J.M."/>
            <person name="White S."/>
            <person name="Whitehead S.L."/>
            <person name="Wilkinson J.E."/>
            <person name="Willey D.L."/>
            <person name="Williams H."/>
            <person name="Wilming L."/>
            <person name="Wray P.W."/>
            <person name="Wu Z."/>
            <person name="Coulson A."/>
            <person name="Vaudin M."/>
            <person name="Sulston J.E."/>
            <person name="Durbin R.M."/>
            <person name="Hubbard T."/>
            <person name="Wooster R."/>
            <person name="Dunham I."/>
            <person name="Carter N.P."/>
            <person name="McVean G."/>
            <person name="Ross M.T."/>
            <person name="Harrow J."/>
            <person name="Olson M.V."/>
            <person name="Beck S."/>
            <person name="Rogers J."/>
            <person name="Bentley D.R."/>
        </authorList>
    </citation>
    <scope>NUCLEOTIDE SEQUENCE [LARGE SCALE GENOMIC DNA]</scope>
</reference>
<reference key="4">
    <citation type="journal article" date="2004" name="Genome Res.">
        <title>The status, quality, and expansion of the NIH full-length cDNA project: the Mammalian Gene Collection (MGC).</title>
        <authorList>
            <consortium name="The MGC Project Team"/>
        </authorList>
    </citation>
    <scope>NUCLEOTIDE SEQUENCE [LARGE SCALE MRNA]</scope>
    <source>
        <tissue>Brain</tissue>
    </source>
</reference>
<reference key="5">
    <citation type="journal article" date="1993" name="J. Interferon Res.">
        <title>Interferon action: cytoplasmic and nuclear localization of the interferon-inducible 52-kD protein that is encoded by the Ifi 200 gene from the gene 200 cluster.</title>
        <authorList>
            <person name="Choubey D."/>
            <person name="Lengyel P."/>
        </authorList>
    </citation>
    <scope>SUBCELLULAR LOCATION</scope>
</reference>
<reference key="6">
    <citation type="journal article" date="2005" name="Biochem. Biophys. Res. Commun.">
        <title>Biochemical and growth regulatory activities of the HIN-200 family member and putative tumor suppressor protein, AIM2.</title>
        <authorList>
            <person name="Cresswell K.S."/>
            <person name="Clarke C.J.P."/>
            <person name="Jackson J.T."/>
            <person name="Darcy P.K."/>
            <person name="Trapani J.A."/>
            <person name="Johnstone R.W."/>
        </authorList>
    </citation>
    <scope>SUBCELLULAR LOCATION</scope>
    <scope>INDUCTION BY IFNG</scope>
    <scope>SUBUNIT</scope>
</reference>
<reference key="7">
    <citation type="journal article" date="2006" name="Mol. Cancer Ther.">
        <title>AIM2 suppresses human breast cancer cell proliferation in vitro and mammary tumor growth in a mouse model.</title>
        <authorList>
            <person name="Chen I.-F."/>
            <person name="Ou-Yang F."/>
            <person name="Hung J.-Y."/>
            <person name="Liu J.-C."/>
            <person name="Wang H."/>
            <person name="Wang S.-C."/>
            <person name="Hou M.-F."/>
            <person name="Hortobagyi G.N."/>
            <person name="Hung M.-C."/>
        </authorList>
    </citation>
    <scope>FUNCTION</scope>
    <scope>ACTIVITY REGULATION</scope>
</reference>
<reference key="8">
    <citation type="journal article" date="2007" name="Genes Chromosomes Cancer">
        <title>The putative tumor suppressor AIM2 is frequently affected by different genetic alterations in microsatellite unstable colon cancers.</title>
        <authorList>
            <person name="Woerner S.M."/>
            <person name="Kloor M."/>
            <person name="Schwitalle Y."/>
            <person name="Youmans H."/>
            <person name="Doeberitz M.K."/>
            <person name="Gebert J."/>
            <person name="Dihlmann S."/>
        </authorList>
    </citation>
    <scope>ROLE IN COLON CANCER</scope>
    <scope>VARIANTS LYS-32 AND TYR-304</scope>
</reference>
<reference key="9">
    <citation type="journal article" date="2009" name="Nat. Immunol.">
        <title>An orthogonal proteomic-genomic screen identifies AIM2 as a cytoplasmic DNA sensor for the inflammasome.</title>
        <authorList>
            <person name="Burckstummer T."/>
            <person name="Baumann C."/>
            <person name="Bluml S."/>
            <person name="Dixit E."/>
            <person name="Durnberger G."/>
            <person name="Jahn H."/>
            <person name="Planyavsky M."/>
            <person name="Bilban M."/>
            <person name="Colinge J."/>
            <person name="Bennett K.L."/>
            <person name="Superti-Furga G."/>
        </authorList>
    </citation>
    <scope>FUNCTION</scope>
    <scope>INDUCTION</scope>
    <scope>DNA-BINDING</scope>
    <scope>SUBCELLULAR LOCATION</scope>
    <scope>INTERACTION WITH PYCARD</scope>
    <scope>MUTAGENESIS OF LEU-14 AND PHE-165</scope>
</reference>
<reference key="10">
    <citation type="journal article" date="2009" name="Nature">
        <title>AIM2 activates the inflammasome and cell death in response to cytoplasmic DNA.</title>
        <authorList>
            <person name="Fernandes-Alnemri T."/>
            <person name="Yu J.W."/>
            <person name="Datta P."/>
            <person name="Wu J."/>
            <person name="Alnemri E.S."/>
        </authorList>
    </citation>
    <scope>FUNCTION</scope>
    <scope>ACTIVITY REGULATION</scope>
    <scope>SUBCELLULAR LOCATION</scope>
    <scope>INTERACTION WITH PYCARD</scope>
    <scope>SELF-ASSOCIATION</scope>
</reference>
<reference key="11">
    <citation type="journal article" date="2009" name="Nature">
        <title>AIM2 recognizes cytosolic dsDNA and forms a caspase-1-activating inflammasome with ASC.</title>
        <authorList>
            <person name="Hornung V."/>
            <person name="Ablasser A."/>
            <person name="Charrel-Dennis M."/>
            <person name="Bauernfeind F."/>
            <person name="Horvath G."/>
            <person name="Caffrey D.R."/>
            <person name="Latz E."/>
            <person name="Fitzgerald K.A."/>
        </authorList>
    </citation>
    <scope>FUNCTION</scope>
    <scope>ACTIVITY REGULATION</scope>
    <scope>SUBCELLULAR LOCATION</scope>
    <scope>DNA-BINDING</scope>
    <scope>INTERACTION WITH PYCARD</scope>
</reference>
<reference key="12">
    <citation type="journal article" date="2010" name="J. Immunol.">
        <title>Involvement of absent in melanoma 2 in inflammasome activation in macrophages infected with Listeria monocytogenes.</title>
        <authorList>
            <person name="Tsuchiya K."/>
            <person name="Hara H."/>
            <person name="Kawamura I."/>
            <person name="Nomura T."/>
            <person name="Yamamoto T."/>
            <person name="Daim S."/>
            <person name="Dewamitta S.R."/>
            <person name="Shen Y."/>
            <person name="Fang R."/>
            <person name="Mitsuyama M."/>
        </authorList>
    </citation>
    <scope>FUNCTION</scope>
</reference>
<reference key="13">
    <citation type="journal article" date="2011" name="PLoS ONE">
        <title>IFI16 protein mediates the anti-inflammatory actions of the type-I interferons through suppression of activation of caspase-1 by inflammasomes.</title>
        <authorList>
            <person name="Veeranki S."/>
            <person name="Duan X."/>
            <person name="Panchanathan R."/>
            <person name="Liu H."/>
            <person name="Choubey D."/>
        </authorList>
    </citation>
    <scope>INTERACTION WITH IFI16</scope>
</reference>
<reference key="14">
    <citation type="journal article" date="2012" name="Mol. Cell. Proteomics">
        <title>Interactome-wide analysis identifies end-binding protein 1 as a crucial component for the speck-like particle formation of activated AIM2 inflammasomes.</title>
        <authorList>
            <person name="Wang L.J."/>
            <person name="Hsu C.W."/>
            <person name="Chen C.C."/>
            <person name="Liang Y."/>
            <person name="Chen L.C."/>
            <person name="Ojcius D.M."/>
            <person name="Tsang N.M."/>
            <person name="Hsueh C."/>
            <person name="Wu C.C."/>
            <person name="Chang Y.S."/>
        </authorList>
    </citation>
    <scope>INTERACTION WITH MAPRE1</scope>
</reference>
<reference key="15">
    <citation type="journal article" date="2012" name="Nature">
        <title>Novel role of PKR in inflammasome activation and HMGB1 release.</title>
        <authorList>
            <person name="Lu B."/>
            <person name="Nakamura T."/>
            <person name="Inouye K."/>
            <person name="Li J."/>
            <person name="Tang Y."/>
            <person name="Lundbaeck P."/>
            <person name="Valdes-Ferrer S.I."/>
            <person name="Olofsson P.S."/>
            <person name="Kalb T."/>
            <person name="Roth J."/>
            <person name="Zou Y."/>
            <person name="Erlandsson-Harris H."/>
            <person name="Yang H."/>
            <person name="Ting J.P."/>
            <person name="Wang H."/>
            <person name="Andersson U."/>
            <person name="Antoine D.J."/>
            <person name="Chavan S.S."/>
            <person name="Hotamisligil G.S."/>
            <person name="Tracey K.J."/>
        </authorList>
    </citation>
    <scope>INTERACTION WITH EIF2AK2</scope>
</reference>
<reference key="16">
    <citation type="journal article" date="2014" name="Nat. Immunol.">
        <title>The PYRIN domain-only protein POP3 inhibits ALR inflammasomes and regulates responses to infection with DNA viruses.</title>
        <authorList>
            <person name="Khare S."/>
            <person name="Ratsimandresy R.A."/>
            <person name="de Almeida L."/>
            <person name="Cuda C.M."/>
            <person name="Rellick S.L."/>
            <person name="Misharin A.V."/>
            <person name="Wallin M.C."/>
            <person name="Gangopadhyay A."/>
            <person name="Forte E."/>
            <person name="Gottwein E."/>
            <person name="Perlman H."/>
            <person name="Reed J.C."/>
            <person name="Greaves D.R."/>
            <person name="Dorfleutner A."/>
            <person name="Stehlik C."/>
        </authorList>
    </citation>
    <scope>SUBCELLULAR LOCATION</scope>
    <scope>INTERACTION WITH PYDC5</scope>
</reference>
<reference key="17">
    <citation type="journal article" date="2015" name="Nat. Commun.">
        <title>Assembly-driven activation of the AIM2 foreign-dsDNA sensor provides a polymerization template for downstream ASC.</title>
        <authorList>
            <person name="Morrone S.R."/>
            <person name="Matyszewski M."/>
            <person name="Yu X."/>
            <person name="Delannoy M."/>
            <person name="Egelman E.H."/>
            <person name="Sohn J."/>
        </authorList>
    </citation>
    <scope>FUNCTION</scope>
    <scope>ACTIVITY REGULATION</scope>
    <scope>MUTAGENESIS OF 10-LEU-LEU-11; 19-ASP--ASP-23; THR-50; GLU-147; PHE-167; LYS-173; GLN-258 AND LYS-272</scope>
</reference>
<reference key="18">
    <citation type="journal article" date="2016" name="Cell Rep.">
        <title>TRIM11 suppresses AIM2 inflammasome by degrading AIM2 via p62-dependent selective autophagy.</title>
        <authorList>
            <person name="Liu T."/>
            <person name="Tang Q."/>
            <person name="Liu K."/>
            <person name="Xie W."/>
            <person name="Liu X."/>
            <person name="Wang H."/>
            <person name="Wang R.F."/>
            <person name="Cui J."/>
        </authorList>
    </citation>
    <scope>ACTIVITY REGULATION</scope>
    <scope>INTERACTION WITH TRIM11</scope>
</reference>
<reference key="19">
    <citation type="journal article" date="2018" name="EMBO Rep.">
        <title>Inhibition of AIM2 inflammasome activation by a novel transcript isoform of IFI16.</title>
        <authorList>
            <person name="Wang P.H."/>
            <person name="Ye Z.W."/>
            <person name="Deng J.J."/>
            <person name="Siu K.L."/>
            <person name="Gao W.W."/>
            <person name="Chaudhary V."/>
            <person name="Cheng Y."/>
            <person name="Fung S.Y."/>
            <person name="Yuen K.S."/>
            <person name="Ho T.H."/>
            <person name="Chan C.P."/>
            <person name="Zhang Y."/>
            <person name="Kok K.H."/>
            <person name="Yang W."/>
            <person name="Chan C.P."/>
            <person name="Jin D.Y."/>
        </authorList>
    </citation>
    <scope>INTERACTION WITH IFI16-BETA</scope>
    <scope>ACTIVITY REGULATION</scope>
</reference>
<reference key="20">
    <citation type="journal article" date="2018" name="Proc. Natl. Acad. Sci. U.S.A.">
        <title>Digital signaling network drives the assembly of the AIM2-ASC inflammasome.</title>
        <authorList>
            <person name="Matyszewski M."/>
            <person name="Morrone S.R."/>
            <person name="Sohn J."/>
        </authorList>
    </citation>
    <scope>FUNCTION</scope>
    <scope>ACTIVITY REGULATION</scope>
    <scope>INTERACTION WITH PYCARD</scope>
</reference>
<reference key="21">
    <citation type="journal article" date="2023" name="Proc. Natl. Acad. Sci. U.S.A.">
        <title>Inhibition of AIM2 inflammasome activation by SOX/ORF37 promotes lytic replication of Kaposi's sarcoma-associated herpesvirus.</title>
        <authorList>
            <person name="Zhang X."/>
            <person name="Lan Q."/>
            <person name="Zhang M."/>
            <person name="Wang F."/>
            <person name="Shi K."/>
            <person name="Li X."/>
            <person name="Kuang E."/>
        </authorList>
    </citation>
    <scope>FUNCTION</scope>
    <scope>SUBCELLULAR LOCATION</scope>
    <scope>INTERACTION WITH HUMAN HERPES VIRUS 8 PROTEIN SOX/ORF37 (MICROBIAL INFECTION)</scope>
    <scope>SUBUNIT</scope>
</reference>
<reference key="22">
    <citation type="journal article" date="2012" name="Immunity">
        <title>Structures of the HIN domain:DNA complexes reveal ligand binding and activation mechanisms of the AIM2 inflammasome and IFI16 receptor.</title>
        <authorList>
            <person name="Jin T."/>
            <person name="Perry A."/>
            <person name="Jiang J."/>
            <person name="Smith P."/>
            <person name="Curry J.A."/>
            <person name="Unterholzner L."/>
            <person name="Jiang Z."/>
            <person name="Horvath G."/>
            <person name="Rathinam V.A."/>
            <person name="Johnstone R.W."/>
            <person name="Hornung V."/>
            <person name="Latz E."/>
            <person name="Bowie A.G."/>
            <person name="Fitzgerald K.A."/>
            <person name="Xiao T.S."/>
        </authorList>
    </citation>
    <scope>X-RAY CRYSTALLOGRAPHY (2.5 ANGSTROMS) OF 144-343 IN COMPLEX WITH DOUBLE-STRANDED DNA</scope>
    <scope>ACTIVITY REGULATION</scope>
    <scope>MUTAGENESIS OF LYS-160; LYS-162; LYS-163; LYS-198; LYS-204; ARG-244; LYS-251; LYS-309; ARG-311; LYS-335 AND ILE-337</scope>
</reference>
<reference evidence="30" key="23">
    <citation type="journal article" date="2013" name="J. Biol. Chem.">
        <title>Structure of the absent in melanoma 2 (AIM2) pyrin domain provides insights into the mechanisms of AIM2 autoinhibition and inflammasome assembly.</title>
        <authorList>
            <person name="Jin T."/>
            <person name="Perry A."/>
            <person name="Smith P."/>
            <person name="Jiang J."/>
            <person name="Xiao T.S."/>
        </authorList>
    </citation>
    <scope>X-RAY CRYSTALLOGRAPHY (2.07 ANGSTROMS) OF 1-107</scope>
    <scope>FUNCTION</scope>
    <scope>INTERACTION WITH PYCARD</scope>
    <scope>MUTAGENESIS OF 19-ASP--ASP-23 AND 27-PHE-PHE-28</scope>
</reference>
<reference evidence="31" key="24">
    <citation type="journal article" date="2014" name="J. Mol. Biol.">
        <title>Crystal structure of the F27G AIM2 PYD mutant and similarities of its self-association to DED/DED interactions.</title>
        <authorList>
            <person name="Lu A."/>
            <person name="Kabaleeswaran V."/>
            <person name="Fu T."/>
            <person name="Magupalli V.G."/>
            <person name="Wu H."/>
        </authorList>
    </citation>
    <scope>X-RAY CRYSTALLOGRAPHY (1.82 ANGSTROMS) OF 1-93</scope>
    <scope>SUBUNIT</scope>
    <scope>MUTAGENESIS OF PHE-27</scope>
</reference>
<reference evidence="32" key="25">
    <citation type="journal article" date="2015" name="Cell Discov.">
        <title>Plasticity in PYD assembly revealed by cryo-EM structure of the PYD filament of AIM2.</title>
        <authorList>
            <person name="Lu A."/>
            <person name="Li Y."/>
            <person name="Yin Q."/>
            <person name="Ruan J."/>
            <person name="Yu X."/>
            <person name="Egelman E."/>
            <person name="Wu H."/>
        </authorList>
    </citation>
    <scope>STRUCTURE BY ELECTRON MICROSCOPY (5.00 ANGSTROMS) OF 1-93</scope>
    <scope>FUNCTION</scope>
    <scope>SUBUNIT</scope>
</reference>
<reference evidence="33" key="26">
    <citation type="journal article" date="2021" name="Nat. Commun.">
        <title>Distinct axial and lateral interactions within homologous filaments dictate the signaling specificity and order of the AIM2-ASC inflammasome.</title>
        <authorList>
            <person name="Matyszewski M."/>
            <person name="Zheng W."/>
            <person name="Lueck J."/>
            <person name="Mazanek Z."/>
            <person name="Mohideen N."/>
            <person name="Lau A.Y."/>
            <person name="Egelman E.H."/>
            <person name="Sohn J."/>
        </authorList>
    </citation>
    <scope>STRUCTURE BY ELECTRON MICROSCOPY (3.20 ANGSTROMS) OF 1-117</scope>
    <scope>FUNCTION</scope>
    <scope>ACTIVITY REGULATION</scope>
    <scope>INTERACTION WITH PYCARD</scope>
    <scope>MUTAGENESIS OF LEU-11; GLU-21; ASP-23; ALA-36; ILE-46; ASN-73 AND MET-75</scope>
</reference>
<feature type="chain" id="PRO_0000153726" description="Interferon-inducible protein AIM2">
    <location>
        <begin position="1"/>
        <end position="343"/>
    </location>
</feature>
<feature type="domain" description="Pyrin" evidence="2">
    <location>
        <begin position="1"/>
        <end position="87"/>
    </location>
</feature>
<feature type="domain" description="HIN-200" evidence="3">
    <location>
        <begin position="138"/>
        <end position="337"/>
    </location>
</feature>
<feature type="sequence variant" id="VAR_022022" description="In dbSNP:rs2276405." evidence="6">
    <original>E</original>
    <variation>K</variation>
    <location>
        <position position="32"/>
    </location>
</feature>
<feature type="sequence variant" id="VAR_043379" description="In dbSNP:rs778047649." evidence="6">
    <original>C</original>
    <variation>Y</variation>
    <location>
        <position position="304"/>
    </location>
</feature>
<feature type="mutagenesis site" description="Impaired double-stranded DNA (dsDNA)-binding, preventing homooligomerization." evidence="18">
    <original>LL</original>
    <variation>AA</variation>
    <location>
        <begin position="10"/>
        <end position="11"/>
    </location>
</feature>
<feature type="mutagenesis site" description="Impaired homooligomerization." evidence="23">
    <original>L</original>
    <variation>A</variation>
    <location>
        <position position="11"/>
    </location>
</feature>
<feature type="mutagenesis site" description="Fails to activate interleukin-1 beta production." evidence="9">
    <original>L</original>
    <variation>A</variation>
    <location>
        <position position="14"/>
    </location>
</feature>
<feature type="mutagenesis site" description="In Mut2; abolished interaction with PYCARD/ASC. Abolished ability to bind double-stranded DNA (dsDNA)." evidence="15 18">
    <original>DEELD</original>
    <variation>AAALA</variation>
    <location>
        <begin position="19"/>
        <end position="23"/>
    </location>
</feature>
<feature type="mutagenesis site" description="Impaired ability to nucleate with PYCARD/ASC." evidence="23">
    <original>E</original>
    <variation>K</variation>
    <location>
        <position position="21"/>
    </location>
</feature>
<feature type="mutagenesis site" description="Impaired homooligomerization." evidence="23">
    <original>D</original>
    <variation>K</variation>
    <location>
        <position position="23"/>
    </location>
</feature>
<feature type="mutagenesis site" description="In Mut1; abolished interaction with PYCARD/ASC." evidence="15">
    <original>FF</original>
    <variation>AA</variation>
    <location>
        <begin position="27"/>
        <end position="28"/>
    </location>
</feature>
<feature type="mutagenesis site" description="Abolished ability to homooligomerize." evidence="16">
    <original>F</original>
    <variation>G</variation>
    <location>
        <position position="27"/>
    </location>
</feature>
<feature type="mutagenesis site" description="Strongly impaired ability to homooligomerize." evidence="16">
    <original>F</original>
    <variation>L</variation>
    <location>
        <position position="27"/>
    </location>
</feature>
<feature type="mutagenesis site" description="Impaired ability to homooligomerize." evidence="16">
    <original>F</original>
    <variation>W</variation>
    <variation>Y</variation>
    <location>
        <position position="27"/>
    </location>
</feature>
<feature type="mutagenesis site" description="Impaired homooligomerization." evidence="23">
    <original>A</original>
    <variation>R</variation>
    <variation>D</variation>
    <location>
        <position position="36"/>
    </location>
</feature>
<feature type="mutagenesis site" description="Impaired homooligomerization." evidence="23">
    <original>I</original>
    <variation>D</variation>
    <location>
        <position position="46"/>
    </location>
</feature>
<feature type="mutagenesis site" description="Impaired double-stranded DNA (dsDNA)-binding, preventing homooligomerization." evidence="18">
    <original>T</original>
    <variation>A</variation>
    <location>
        <position position="50"/>
    </location>
</feature>
<feature type="mutagenesis site" description="Impaired ability to form AIM2 inflammasome filaments in response to double-stranded DNA (dsDNA)." evidence="23">
    <original>N</original>
    <variation>L</variation>
    <location>
        <position position="73"/>
    </location>
</feature>
<feature type="mutagenesis site" description="Impaired ability to nucleate with PYCARD/ASC." evidence="23">
    <original>M</original>
    <variation>D</variation>
    <location>
        <position position="75"/>
    </location>
</feature>
<feature type="mutagenesis site" description="Strongly reduced ability to homooligomerize upon double-stranded DNA (dsDNA)-binding." evidence="18">
    <original>E</original>
    <variation>A</variation>
    <location>
        <position position="147"/>
    </location>
</feature>
<feature type="mutagenesis site" description="Impairs DNA binding; when associated with A-160; A-K162; A-163; A-198; A-204. Impairs DNA binding; when associated with A-160; A-162; A-163; A-198; A-204; A-244; A-251; A-309; A-311; A-355 and A-337." evidence="12">
    <original>K</original>
    <variation>A</variation>
    <location>
        <position position="160"/>
    </location>
</feature>
<feature type="mutagenesis site" description="Impairs DNA binding; when associated with A-160; A-162; A-163; A-198; A-204. Impairs DNA binding; when associated with A-160; A-162; A-163; A-198; A-204; A-244; A-251; A-309; A-311; A-355 and A-337." evidence="12">
    <original>K</original>
    <variation>A</variation>
    <location>
        <position position="162"/>
    </location>
</feature>
<feature type="mutagenesis site" description="Impairs DNA binding; when associated with A-160; A-162; A-163; A-198; A-204. Impairs DNA binding; when associated with A-160; A-162; A-163; A-198; A-204; A-244; A-251; A-309; A-311; A-355 and A-337." evidence="12">
    <original>K</original>
    <variation>A</variation>
    <location>
        <position position="163"/>
    </location>
</feature>
<feature type="mutagenesis site" description="Impairs DNA binding." evidence="9">
    <original>F</original>
    <variation>A</variation>
    <location>
        <position position="165"/>
    </location>
</feature>
<feature type="mutagenesis site" description="Strongly reduced ability to homooligomerize upon double-stranded DNA (dsDNA)-binding." evidence="18">
    <original>F</original>
    <variation>A</variation>
    <location>
        <position position="167"/>
    </location>
</feature>
<feature type="mutagenesis site" description="Impaired double-stranded DNA (dsDNA)-binding, preventing homooligomerization." evidence="18">
    <original>K</original>
    <variation>A</variation>
    <location>
        <position position="173"/>
    </location>
</feature>
<feature type="mutagenesis site" description="Impairs DNA binding; when associated with A-160; A-162; A-163; A-198; A-204. Impairs DNA binding; when associated with A-160; A-162; A-163; A-198; A-204; A-244; A-251; A-309; A-311; A-355 and A-337." evidence="12">
    <original>K</original>
    <variation>A</variation>
    <location>
        <position position="198"/>
    </location>
</feature>
<feature type="mutagenesis site" description="Impairs DNA binding; when associated with A-160; A-162; A-163; A-198; A-204. Impairs DNA binding; when associated with A-160; A-162; A-163; A-198; A-204; A-244; A-251; A-309; A-311; A-355 and A-337." evidence="12">
    <original>K</original>
    <variation>A</variation>
    <location>
        <position position="204"/>
    </location>
</feature>
<feature type="mutagenesis site" description="Impairs DNA binding; when associated with A-160; A-162; A-163; A-198; A-204. Impairs DNA binding; when associated with A-160; A-162; A-163; A-198; A-204; A-244; A-251; A-309; A-311; A-355 and A-337." evidence="12">
    <original>R</original>
    <variation>A</variation>
    <location>
        <position position="244"/>
    </location>
</feature>
<feature type="mutagenesis site" description="Impairs DNA binding; when associated with A-160; A-162; A-163; A-198; A-204. Impairs DNA binding; when associated with A-160; A-162; A-163; A-198; A-204; A-244; A-251; A-309; A-311; A-355 and A-337." evidence="12">
    <original>K</original>
    <variation>A</variation>
    <location>
        <position position="251"/>
    </location>
</feature>
<feature type="mutagenesis site" description="Impaired double-stranded DNA (dsDNA)-binding, preventing homooligomerization." evidence="18">
    <original>Q</original>
    <variation>A</variation>
    <location>
        <position position="258"/>
    </location>
</feature>
<feature type="mutagenesis site" description="Strongly reduced ability to homooligomerize upon double-stranded DNA (dsDNA)-binding." evidence="18">
    <original>K</original>
    <variation>A</variation>
    <location>
        <position position="272"/>
    </location>
</feature>
<feature type="mutagenesis site" description="Impairs DNA binding; when associated with A-160; A-162; A-163; A-198; A-204. Impairs DNA binding; when associated with A-160; A-162; A-163; A-198; A-204; A-244; A-251; A-309; A-311; A-355 and A-337." evidence="12">
    <original>K</original>
    <variation>A</variation>
    <location>
        <position position="309"/>
    </location>
</feature>
<feature type="mutagenesis site" description="Impairs DNA binding; when associated with A-160; A-162; A-163; A-198; A-204. Impairs DNA binding; when associated with A-160; A-162; A-163; A-198; A-204; A-244; A-251; A-309; A-311; A-355 and A-337." evidence="12">
    <original>R</original>
    <variation>A</variation>
    <location>
        <position position="311"/>
    </location>
</feature>
<feature type="mutagenesis site" description="Impairs DNA binding; when associated with A-160; A-162; A-163; A-198; A-204. Impairs DNA binding; when associated with A-160; A-162; A-163; A-198; A-204; A-244; A-251; A-309; A-311; A-355 and A-337." evidence="12">
    <original>K</original>
    <variation>A</variation>
    <location>
        <position position="335"/>
    </location>
</feature>
<feature type="mutagenesis site" description="Impairs DNA binding; when associated with A-160; A-162; A-163; A-198; A-204. Impairs DNA binding; when associated with A-160; A-162; A-163; A-198; A-204; A-244; A-251; A-309; A-311; A-355 and A-337." evidence="12">
    <original>I</original>
    <variation>A</variation>
    <location>
        <position position="337"/>
    </location>
</feature>
<feature type="sequence conflict" description="In Ref. 2; BAF84731." evidence="28" ref="2">
    <original>N</original>
    <variation>D</variation>
    <location>
        <position position="253"/>
    </location>
</feature>
<feature type="helix" evidence="36">
    <location>
        <begin position="1"/>
        <end position="11"/>
    </location>
</feature>
<feature type="helix" evidence="36">
    <location>
        <begin position="14"/>
        <end position="16"/>
    </location>
</feature>
<feature type="helix" evidence="36">
    <location>
        <begin position="19"/>
        <end position="29"/>
    </location>
</feature>
<feature type="turn" evidence="36">
    <location>
        <begin position="30"/>
        <end position="32"/>
    </location>
</feature>
<feature type="helix" evidence="36">
    <location>
        <begin position="37"/>
        <end position="40"/>
    </location>
</feature>
<feature type="helix" evidence="36">
    <location>
        <begin position="45"/>
        <end position="56"/>
    </location>
</feature>
<feature type="helix" evidence="36">
    <location>
        <begin position="58"/>
        <end position="71"/>
    </location>
</feature>
<feature type="helix" evidence="36">
    <location>
        <begin position="75"/>
        <end position="91"/>
    </location>
</feature>
<feature type="strand" evidence="34">
    <location>
        <begin position="148"/>
        <end position="150"/>
    </location>
</feature>
<feature type="strand" evidence="35">
    <location>
        <begin position="154"/>
        <end position="161"/>
    </location>
</feature>
<feature type="strand" evidence="35">
    <location>
        <begin position="165"/>
        <end position="169"/>
    </location>
</feature>
<feature type="strand" evidence="35">
    <location>
        <begin position="172"/>
        <end position="182"/>
    </location>
</feature>
<feature type="strand" evidence="35">
    <location>
        <begin position="187"/>
        <end position="192"/>
    </location>
</feature>
<feature type="helix" evidence="35">
    <location>
        <begin position="195"/>
        <end position="199"/>
    </location>
</feature>
<feature type="strand" evidence="35">
    <location>
        <begin position="206"/>
        <end position="214"/>
    </location>
</feature>
<feature type="strand" evidence="35">
    <location>
        <begin position="219"/>
        <end position="221"/>
    </location>
</feature>
<feature type="strand" evidence="35">
    <location>
        <begin position="225"/>
        <end position="229"/>
    </location>
</feature>
<feature type="helix" evidence="35">
    <location>
        <begin position="240"/>
        <end position="247"/>
    </location>
</feature>
<feature type="helix" evidence="35">
    <location>
        <begin position="252"/>
        <end position="256"/>
    </location>
</feature>
<feature type="strand" evidence="35">
    <location>
        <begin position="263"/>
        <end position="275"/>
    </location>
</feature>
<feature type="strand" evidence="35">
    <location>
        <begin position="277"/>
        <end position="286"/>
    </location>
</feature>
<feature type="strand" evidence="35">
    <location>
        <begin position="289"/>
        <end position="296"/>
    </location>
</feature>
<feature type="helix" evidence="35">
    <location>
        <begin position="300"/>
        <end position="302"/>
    </location>
</feature>
<feature type="strand" evidence="35">
    <location>
        <begin position="309"/>
        <end position="319"/>
    </location>
</feature>
<feature type="strand" evidence="35">
    <location>
        <begin position="321"/>
        <end position="327"/>
    </location>
</feature>
<feature type="strand" evidence="35">
    <location>
        <begin position="333"/>
        <end position="337"/>
    </location>
</feature>
<organism>
    <name type="scientific">Homo sapiens</name>
    <name type="common">Human</name>
    <dbReference type="NCBI Taxonomy" id="9606"/>
    <lineage>
        <taxon>Eukaryota</taxon>
        <taxon>Metazoa</taxon>
        <taxon>Chordata</taxon>
        <taxon>Craniata</taxon>
        <taxon>Vertebrata</taxon>
        <taxon>Euteleostomi</taxon>
        <taxon>Mammalia</taxon>
        <taxon>Eutheria</taxon>
        <taxon>Euarchontoglires</taxon>
        <taxon>Primates</taxon>
        <taxon>Haplorrhini</taxon>
        <taxon>Catarrhini</taxon>
        <taxon>Hominidae</taxon>
        <taxon>Homo</taxon>
    </lineage>
</organism>
<proteinExistence type="evidence at protein level"/>
<accession>O14862</accession>
<accession>A8K7M7</accession>
<accession>Q5T3V9</accession>
<accession>Q96FG9</accession>